<accession>P89462</accession>
<reference key="1">
    <citation type="journal article" date="1998" name="J. Virol.">
        <title>The genome sequence of herpes simplex virus type 2.</title>
        <authorList>
            <person name="Dolan A."/>
            <person name="Jamieson F.E."/>
            <person name="Cunningham C."/>
            <person name="Barnett B.C."/>
            <person name="McGeoch D.J."/>
        </authorList>
    </citation>
    <scope>NUCLEOTIDE SEQUENCE [LARGE SCALE GENOMIC DNA]</scope>
</reference>
<reference key="2">
    <citation type="journal article" date="1995" name="Virology">
        <title>Intracellular internalization and signaling pathways triggered by the large subunit of HSV-2 ribonucleotide reductase (ICP10).</title>
        <authorList>
            <person name="Hunter J.C."/>
            <person name="Smith C.C."/>
            <person name="Bose D."/>
            <person name="Kulka M."/>
            <person name="Broderick R."/>
            <person name="Aurelian L."/>
        </authorList>
    </citation>
    <scope>SUBCELLULAR LOCATION</scope>
</reference>
<reference key="3">
    <citation type="journal article" date="2002" name="J. Virol.">
        <title>The herpes simplex virus type 2 R1 protein kinase (ICP10 PK) blocks apoptosis in hippocampal neurons, involving activation of the MEK/MAPK survival pathway.</title>
        <authorList>
            <person name="Perkins D."/>
            <person name="Pereira E.F."/>
            <person name="Gober M."/>
            <person name="Yarowsky P.J."/>
            <person name="Aurelian L."/>
        </authorList>
    </citation>
    <scope>FUNCTION</scope>
</reference>
<reference key="4">
    <citation type="journal article" date="2003" name="FEBS Lett.">
        <title>The R1 subunit of herpes simplex virus ribonucleotide reductase has chaperone-like activity similar to Hsp27.</title>
        <authorList>
            <person name="Chabaud S."/>
            <person name="Lambert H."/>
            <person name="Sasseville A.M."/>
            <person name="Lavoie H."/>
            <person name="Guilbault C."/>
            <person name="Massie B."/>
            <person name="Landry J."/>
            <person name="Langelier Y."/>
        </authorList>
    </citation>
    <scope>ALPHA-CRYSTALLIN DOMAIN</scope>
</reference>
<reference key="5">
    <citation type="journal article" date="2009" name="Trends Biochem. Sci.">
        <title>Tinkering with a viral ribonucleotide reductase.</title>
        <authorList>
            <person name="Lembo D."/>
            <person name="Brune W."/>
        </authorList>
    </citation>
    <scope>REVIEW</scope>
</reference>
<reference key="6">
    <citation type="journal article" date="2015" name="Cell Host Microbe">
        <title>Herpes simplex virus suppresses necroptosis in human cells.</title>
        <authorList>
            <person name="Guo H."/>
            <person name="Omoto S."/>
            <person name="Harris P.A."/>
            <person name="Finger J.N."/>
            <person name="Bertin J."/>
            <person name="Gough P.J."/>
            <person name="Kaiser W.J."/>
            <person name="Mocarski E.S."/>
        </authorList>
    </citation>
    <scope>FUNCTION</scope>
    <scope>INTERACTION WITH HOST RIPK1; RIPK3 AND CASP8</scope>
</reference>
<protein>
    <recommendedName>
        <fullName evidence="2">Ribonucleoside-diphosphate reductase large subunit</fullName>
        <shortName evidence="2">R1</shortName>
        <ecNumber evidence="2">1.17.4.1</ecNumber>
    </recommendedName>
    <alternativeName>
        <fullName evidence="2">Ribonucleotide reductase large subunit</fullName>
    </alternativeName>
</protein>
<evidence type="ECO:0000250" key="1">
    <source>
        <dbReference type="UniProtKB" id="P08543"/>
    </source>
</evidence>
<evidence type="ECO:0000255" key="2">
    <source>
        <dbReference type="HAMAP-Rule" id="MF_04026"/>
    </source>
</evidence>
<evidence type="ECO:0000256" key="3">
    <source>
        <dbReference type="SAM" id="MobiDB-lite"/>
    </source>
</evidence>
<evidence type="ECO:0000269" key="4">
    <source>
    </source>
</evidence>
<evidence type="ECO:0000269" key="5">
    <source>
    </source>
</evidence>
<evidence type="ECO:0000269" key="6">
    <source>
    </source>
</evidence>
<evidence type="ECO:0000305" key="7"/>
<gene>
    <name evidence="2" type="primary">RIR1</name>
    <name type="ordered locus">UL39</name>
</gene>
<name>RIR1_HHV2H</name>
<keyword id="KW-0067">ATP-binding</keyword>
<keyword id="KW-1015">Disulfide bond</keyword>
<keyword id="KW-0235">DNA replication</keyword>
<keyword id="KW-0244">Early protein</keyword>
<keyword id="KW-1032">Host cell membrane</keyword>
<keyword id="KW-1039">Host endosome</keyword>
<keyword id="KW-1043">Host membrane</keyword>
<keyword id="KW-0945">Host-virus interaction</keyword>
<keyword id="KW-1085">Inhibition of host caspases by virus</keyword>
<keyword id="KW-0472">Membrane</keyword>
<keyword id="KW-1119">Modulation of host cell apoptosis by virus</keyword>
<keyword id="KW-0547">Nucleotide-binding</keyword>
<keyword id="KW-0560">Oxidoreductase</keyword>
<keyword id="KW-1185">Reference proteome</keyword>
<keyword id="KW-1251">Viral latency</keyword>
<keyword id="KW-1272">Viral reactivation from latency</keyword>
<organismHost>
    <name type="scientific">Homo sapiens</name>
    <name type="common">Human</name>
    <dbReference type="NCBI Taxonomy" id="9606"/>
</organismHost>
<comment type="function">
    <text evidence="1 2 4 5">Ribonucleoside-diphosphate reductase holoenzyme that provides the precursors necessary for viral DNA synthesis. Allows virus growth in non-dividing cells, as well as reactivation from latency in infected hosts. Catalyzes the biosynthesis of deoxyribonucleotides from the corresponding ribonucleotides (By similarity). The N-terminal region confers antiapoptotic activity in differentiated cells such as neurons and is important for viral reactivation to increase neural survivability (PubMed:11773417). Prevents host necroptosis by targeting host RIPK1 and RIPK3, thereby hampering the formation of necroptotic RIPK1-RIPK3 complexes (PubMed:25674983). May form hetero-amyloid structures with host proteins RIPK3 or ZBP1, thereby preventing RIPK3- and ZBP1-mediated necroptosis (By similarity). In addition, inhibits extrinsic apoptosis by targeting host CASP8 (PubMed:25674983).</text>
</comment>
<comment type="catalytic activity">
    <reaction evidence="2">
        <text>a 2'-deoxyribonucleoside 5'-diphosphate + [thioredoxin]-disulfide + H2O = a ribonucleoside 5'-diphosphate + [thioredoxin]-dithiol</text>
        <dbReference type="Rhea" id="RHEA:23252"/>
        <dbReference type="Rhea" id="RHEA-COMP:10698"/>
        <dbReference type="Rhea" id="RHEA-COMP:10700"/>
        <dbReference type="ChEBI" id="CHEBI:15377"/>
        <dbReference type="ChEBI" id="CHEBI:29950"/>
        <dbReference type="ChEBI" id="CHEBI:50058"/>
        <dbReference type="ChEBI" id="CHEBI:57930"/>
        <dbReference type="ChEBI" id="CHEBI:73316"/>
        <dbReference type="EC" id="1.17.4.1"/>
    </reaction>
</comment>
<comment type="subunit">
    <text evidence="1 2 5">Heterotetramer composed of a homodimer of the large subunit (R1) and a homodimer of the small subunit (R2). Larger multisubunit protein complex are also active, composed of (R1)n(R2)n (By similarity). May self-assemble (via RIP homotypic interaction motif/RHIM) into homomeric fibrillar amyloid structures (By similarity). Interacts (via RHIM) with human RIPK1 (via RHIM) (PubMed:25674983). Interacts (via RHIM) with human RIPK3 (via RHIM) (PubMed:25674983). May interact (via RHIM) with human ZBP1 (via RHIM) (By similarity). Interacts (via C-terminus) with host CASP8 (PubMed:25674983).</text>
</comment>
<comment type="subcellular location">
    <subcellularLocation>
        <location evidence="6">Host cell membrane</location>
    </subcellularLocation>
    <subcellularLocation>
        <location evidence="6">Host endosome membrane</location>
    </subcellularLocation>
    <text evidence="7">Associates with the host cytoskeleton.</text>
</comment>
<comment type="domain">
    <text>Contains an alpha-crystallin domain homologous to small heat-shock proteins.</text>
</comment>
<comment type="domain">
    <text evidence="1">The RIP homotypic interaction motif/RHIM may drive self-assembly into homomeric amyloid structures and mediates interaction with the RHIM motif of host proteins RIPK3 and ZBP1 to form heteromeric amyloid structures.</text>
</comment>
<comment type="similarity">
    <text evidence="2">Belongs to the ribonucleoside diphosphate reductase large chain family.</text>
</comment>
<sequence length="1142" mass="124923">MANRPAASALAGARSPSERQEPREPEVAPPGGDHVFCRKVSGVMVLSSDPPGPAAYRISDSSFVQCGSNCSMIIDGDVARGHLRDLEGATSTGAFVAISNVAAGGDGRTAVVALGGTSGPSATTSVGTQTSGEFLHGNPRTPEPQGPQAVPPPPPPPFPWGHECCARRDARGGAEKDVGAAESWSDGPSSDSETEDSDSSDEDTGSETLSRSSSIWAAGATDDDDSDSDSRSDDSVQPDVVVRRRWSDGPAPVAFPKPRRPGDSPGNPGLGAGTGPGSATDPRASADSDSAAHAAAPQADVAPVLDSQPTVGTDPGYPVPLELTPENAEAVARFLGDAVDREPALMLEYFCRCAREESKRVPPRTFGSAPRLTEDDFGLLNYALAEMRRLCLDLPPVPPNAYTPYHLREYATRLVNGFKPLVRRSARLYRILGVLVHLRIRTREASFEEWMRSKEVDLDFGLTERLREHEAQLMILAQALNPYDCLIHSTPNTLVERGLQSALKYEEFYLKRFGGHYMESVFQMYTRIAGFLACRATRGMRHIALGRQGSWWEMFKFFFHRLYDHQIVPSTPAMLNLGTRNYYTSSCYLVNPQATTNQATLRAITGNVSAILARNGGIGLCMQAFNDASPGTASIMPALKVLDSLVAAHNKQSTRPTGACVYLEPWHSDVRAVLRMKGVLAGEEAQRCDNIFSALWMPDLFFKRLIRHLDGEKNVTWSLFDRDTSMSLADFHGEEFEKLYEHLEAMGFGETIPIQDLAYAIVRSAATTGSPFIMFKDAVNRHYIYDTQGAAIAGSNLCTEIVHPASKRSSGVCNLGSVNLARCVSRQTFDFGRLRDAVQACVLMVNIMIDSTLQPTPQCTRGNDNLRSMGIGMQGLHTACLKMGLDLESAEFRDLNTHIAEVMLLAAMKTSNALCVRGARPFSHFKRSMYRAGRFHWERFSNASPRYEGEWEMLRQSMMKHGLRNSQFIALMPTAASAQISDVSEGFAPLFTNLFSKVTRDGETLRPNTLLLKELERTFGGKRLLDAMDGLEAKQWSVAQALPCLDPAHPLRRFKTAFDYDQELLIDLCADRAPYVDHSQSMTLYVTEKADGTLPASTLVRLLVHAYKRGLKTGMYYCKVRKATNSGVFAGDDNIVCTSCAL</sequence>
<proteinExistence type="evidence at protein level"/>
<dbReference type="EC" id="1.17.4.1" evidence="2"/>
<dbReference type="EMBL" id="Z86099">
    <property type="protein sequence ID" value="CAB06725.1"/>
    <property type="molecule type" value="Genomic_DNA"/>
</dbReference>
<dbReference type="PIR" id="A05247">
    <property type="entry name" value="A05247"/>
</dbReference>
<dbReference type="RefSeq" id="YP_009137191.1">
    <property type="nucleotide sequence ID" value="NC_001798.2"/>
</dbReference>
<dbReference type="SMR" id="P89462"/>
<dbReference type="BioGRID" id="1677930">
    <property type="interactions" value="1"/>
</dbReference>
<dbReference type="IntAct" id="P89462">
    <property type="interactions" value="2"/>
</dbReference>
<dbReference type="GeneID" id="1487325"/>
<dbReference type="KEGG" id="vg:1487325"/>
<dbReference type="Proteomes" id="UP000001874">
    <property type="component" value="Segment"/>
</dbReference>
<dbReference type="GO" id="GO:0044175">
    <property type="term" value="C:host cell endosome membrane"/>
    <property type="evidence" value="ECO:0007669"/>
    <property type="project" value="UniProtKB-SubCell"/>
</dbReference>
<dbReference type="GO" id="GO:0020002">
    <property type="term" value="C:host cell plasma membrane"/>
    <property type="evidence" value="ECO:0007669"/>
    <property type="project" value="UniProtKB-SubCell"/>
</dbReference>
<dbReference type="GO" id="GO:0016020">
    <property type="term" value="C:membrane"/>
    <property type="evidence" value="ECO:0007669"/>
    <property type="project" value="UniProtKB-KW"/>
</dbReference>
<dbReference type="GO" id="GO:0005524">
    <property type="term" value="F:ATP binding"/>
    <property type="evidence" value="ECO:0007669"/>
    <property type="project" value="UniProtKB-UniRule"/>
</dbReference>
<dbReference type="GO" id="GO:0004748">
    <property type="term" value="F:ribonucleoside-diphosphate reductase activity, thioredoxin disulfide as acceptor"/>
    <property type="evidence" value="ECO:0007669"/>
    <property type="project" value="UniProtKB-UniRule"/>
</dbReference>
<dbReference type="GO" id="GO:0009263">
    <property type="term" value="P:deoxyribonucleotide biosynthetic process"/>
    <property type="evidence" value="ECO:0007669"/>
    <property type="project" value="InterPro"/>
</dbReference>
<dbReference type="GO" id="GO:0006260">
    <property type="term" value="P:DNA replication"/>
    <property type="evidence" value="ECO:0007669"/>
    <property type="project" value="UniProtKB-KW"/>
</dbReference>
<dbReference type="GO" id="GO:0010804">
    <property type="term" value="P:negative regulation of tumor necrosis factor-mediated signaling pathway"/>
    <property type="evidence" value="ECO:0000315"/>
    <property type="project" value="AgBase"/>
</dbReference>
<dbReference type="GO" id="GO:0019046">
    <property type="term" value="P:release from viral latency"/>
    <property type="evidence" value="ECO:0007669"/>
    <property type="project" value="UniProtKB-KW"/>
</dbReference>
<dbReference type="GO" id="GO:0033668">
    <property type="term" value="P:symbiont-mediated suppression of host apoptosis"/>
    <property type="evidence" value="ECO:0007669"/>
    <property type="project" value="UniProtKB-KW"/>
</dbReference>
<dbReference type="FunFam" id="3.20.70.20:FF:000021">
    <property type="entry name" value="Ribonucleoside-diphosphate reductase large subunit"/>
    <property type="match status" value="1"/>
</dbReference>
<dbReference type="Gene3D" id="3.20.70.20">
    <property type="match status" value="1"/>
</dbReference>
<dbReference type="HAMAP" id="MF_04026">
    <property type="entry name" value="HSV_RIR1"/>
    <property type="match status" value="1"/>
</dbReference>
<dbReference type="InterPro" id="IPR034717">
    <property type="entry name" value="HSV_RIR1"/>
</dbReference>
<dbReference type="InterPro" id="IPR013346">
    <property type="entry name" value="NrdE_NrdA_C"/>
</dbReference>
<dbReference type="InterPro" id="IPR000788">
    <property type="entry name" value="RNR_lg_C"/>
</dbReference>
<dbReference type="InterPro" id="IPR013509">
    <property type="entry name" value="RNR_lsu_N"/>
</dbReference>
<dbReference type="InterPro" id="IPR039718">
    <property type="entry name" value="Rrm1"/>
</dbReference>
<dbReference type="NCBIfam" id="TIGR02506">
    <property type="entry name" value="NrdE_NrdA"/>
    <property type="match status" value="1"/>
</dbReference>
<dbReference type="PANTHER" id="PTHR11573">
    <property type="entry name" value="RIBONUCLEOSIDE-DIPHOSPHATE REDUCTASE LARGE CHAIN"/>
    <property type="match status" value="1"/>
</dbReference>
<dbReference type="PANTHER" id="PTHR11573:SF6">
    <property type="entry name" value="RIBONUCLEOSIDE-DIPHOSPHATE REDUCTASE LARGE SUBUNIT"/>
    <property type="match status" value="1"/>
</dbReference>
<dbReference type="Pfam" id="PF02867">
    <property type="entry name" value="Ribonuc_red_lgC"/>
    <property type="match status" value="1"/>
</dbReference>
<dbReference type="Pfam" id="PF00317">
    <property type="entry name" value="Ribonuc_red_lgN"/>
    <property type="match status" value="1"/>
</dbReference>
<dbReference type="PRINTS" id="PR01183">
    <property type="entry name" value="RIBORDTASEM1"/>
</dbReference>
<dbReference type="SUPFAM" id="SSF51998">
    <property type="entry name" value="PFL-like glycyl radical enzymes"/>
    <property type="match status" value="1"/>
</dbReference>
<dbReference type="PROSITE" id="PS00089">
    <property type="entry name" value="RIBORED_LARGE"/>
    <property type="match status" value="1"/>
</dbReference>
<feature type="chain" id="PRO_0000385162" description="Ribonucleoside-diphosphate reductase large subunit">
    <location>
        <begin position="1"/>
        <end position="1142"/>
    </location>
</feature>
<feature type="region of interest" description="Disordered" evidence="3">
    <location>
        <begin position="1"/>
        <end position="33"/>
    </location>
</feature>
<feature type="region of interest" description="Disordered" evidence="3">
    <location>
        <begin position="118"/>
        <end position="322"/>
    </location>
</feature>
<feature type="region of interest" description="alpha-crystallin domain">
    <location>
        <begin position="294"/>
        <end position="400"/>
    </location>
</feature>
<feature type="short sequence motif" description="RIP homotypic interaction motif (RHIM)" evidence="1">
    <location>
        <begin position="55"/>
        <end position="75"/>
    </location>
</feature>
<feature type="compositionally biased region" description="Basic and acidic residues" evidence="3">
    <location>
        <begin position="16"/>
        <end position="26"/>
    </location>
</feature>
<feature type="compositionally biased region" description="Polar residues" evidence="3">
    <location>
        <begin position="119"/>
        <end position="132"/>
    </location>
</feature>
<feature type="compositionally biased region" description="Pro residues" evidence="3">
    <location>
        <begin position="141"/>
        <end position="159"/>
    </location>
</feature>
<feature type="compositionally biased region" description="Basic and acidic residues" evidence="3">
    <location>
        <begin position="164"/>
        <end position="179"/>
    </location>
</feature>
<feature type="compositionally biased region" description="Acidic residues" evidence="3">
    <location>
        <begin position="192"/>
        <end position="205"/>
    </location>
</feature>
<feature type="compositionally biased region" description="Low complexity" evidence="3">
    <location>
        <begin position="277"/>
        <end position="303"/>
    </location>
</feature>
<feature type="active site" description="Proton acceptor" evidence="2">
    <location>
        <position position="796"/>
    </location>
</feature>
<feature type="active site" description="Cysteine radical intermediate" evidence="2">
    <location>
        <position position="798"/>
    </location>
</feature>
<feature type="active site" description="Proton acceptor" evidence="2">
    <location>
        <position position="800"/>
    </location>
</feature>
<feature type="binding site" evidence="2">
    <location>
        <position position="571"/>
    </location>
    <ligand>
        <name>substrate</name>
    </ligand>
</feature>
<feature type="binding site" evidence="2">
    <location>
        <begin position="586"/>
        <end position="587"/>
    </location>
    <ligand>
        <name>substrate</name>
    </ligand>
</feature>
<feature type="binding site" evidence="2">
    <location>
        <position position="617"/>
    </location>
    <ligand>
        <name>substrate</name>
    </ligand>
</feature>
<feature type="binding site" evidence="2">
    <location>
        <begin position="796"/>
        <end position="800"/>
    </location>
    <ligand>
        <name>substrate</name>
    </ligand>
</feature>
<feature type="binding site" evidence="2">
    <location>
        <begin position="973"/>
        <end position="977"/>
    </location>
    <ligand>
        <name>substrate</name>
    </ligand>
</feature>
<feature type="site" description="Important for hydrogen atom transfer" evidence="2">
    <location>
        <position position="587"/>
    </location>
</feature>
<feature type="site" description="Important for hydrogen atom transfer" evidence="2">
    <location>
        <position position="813"/>
    </location>
</feature>
<feature type="site" description="Important for electron transfer" evidence="2">
    <location>
        <position position="1116"/>
    </location>
</feature>
<feature type="site" description="Important for electron transfer" evidence="2">
    <location>
        <position position="1117"/>
    </location>
</feature>
<feature type="site" description="Interacts with thioredoxin/glutaredoxin" evidence="2">
    <location>
        <position position="1137"/>
    </location>
</feature>
<feature type="site" description="Interacts with thioredoxin/glutaredoxin" evidence="2">
    <location>
        <position position="1140"/>
    </location>
</feature>
<feature type="disulfide bond" description="Redox-active" evidence="2">
    <location>
        <begin position="587"/>
        <end position="813"/>
    </location>
</feature>
<organism>
    <name type="scientific">Human herpesvirus 2 (strain HG52)</name>
    <name type="common">HHV-2</name>
    <name type="synonym">Human herpes simplex virus 2</name>
    <dbReference type="NCBI Taxonomy" id="10315"/>
    <lineage>
        <taxon>Viruses</taxon>
        <taxon>Duplodnaviria</taxon>
        <taxon>Heunggongvirae</taxon>
        <taxon>Peploviricota</taxon>
        <taxon>Herviviricetes</taxon>
        <taxon>Herpesvirales</taxon>
        <taxon>Orthoherpesviridae</taxon>
        <taxon>Alphaherpesvirinae</taxon>
        <taxon>Simplexvirus</taxon>
        <taxon>Simplexvirus humanalpha2</taxon>
        <taxon>Human herpesvirus 2</taxon>
    </lineage>
</organism>